<gene>
    <name evidence="1" type="primary">leuS</name>
    <name type="ordered locus">Pden_2765</name>
</gene>
<name>SYL_PARDP</name>
<feature type="chain" id="PRO_0000334787" description="Leucine--tRNA ligase">
    <location>
        <begin position="1"/>
        <end position="844"/>
    </location>
</feature>
<feature type="short sequence motif" description="'HIGH' region">
    <location>
        <begin position="39"/>
        <end position="49"/>
    </location>
</feature>
<feature type="short sequence motif" description="'KMSKS' region">
    <location>
        <begin position="621"/>
        <end position="625"/>
    </location>
</feature>
<feature type="binding site" evidence="1">
    <location>
        <position position="624"/>
    </location>
    <ligand>
        <name>ATP</name>
        <dbReference type="ChEBI" id="CHEBI:30616"/>
    </ligand>
</feature>
<dbReference type="EC" id="6.1.1.4" evidence="1"/>
<dbReference type="EMBL" id="CP000489">
    <property type="protein sequence ID" value="ABL70849.1"/>
    <property type="molecule type" value="Genomic_DNA"/>
</dbReference>
<dbReference type="RefSeq" id="WP_011749040.1">
    <property type="nucleotide sequence ID" value="NC_008686.1"/>
</dbReference>
<dbReference type="SMR" id="A1B5Q5"/>
<dbReference type="STRING" id="318586.Pden_2765"/>
<dbReference type="EnsemblBacteria" id="ABL70849">
    <property type="protein sequence ID" value="ABL70849"/>
    <property type="gene ID" value="Pden_2765"/>
</dbReference>
<dbReference type="GeneID" id="93451163"/>
<dbReference type="KEGG" id="pde:Pden_2765"/>
<dbReference type="eggNOG" id="COG0495">
    <property type="taxonomic scope" value="Bacteria"/>
</dbReference>
<dbReference type="HOGENOM" id="CLU_004427_0_0_5"/>
<dbReference type="OrthoDB" id="9810365at2"/>
<dbReference type="Proteomes" id="UP000000361">
    <property type="component" value="Chromosome 1"/>
</dbReference>
<dbReference type="GO" id="GO:0005829">
    <property type="term" value="C:cytosol"/>
    <property type="evidence" value="ECO:0007669"/>
    <property type="project" value="TreeGrafter"/>
</dbReference>
<dbReference type="GO" id="GO:0002161">
    <property type="term" value="F:aminoacyl-tRNA deacylase activity"/>
    <property type="evidence" value="ECO:0007669"/>
    <property type="project" value="InterPro"/>
</dbReference>
<dbReference type="GO" id="GO:0005524">
    <property type="term" value="F:ATP binding"/>
    <property type="evidence" value="ECO:0007669"/>
    <property type="project" value="UniProtKB-UniRule"/>
</dbReference>
<dbReference type="GO" id="GO:0004823">
    <property type="term" value="F:leucine-tRNA ligase activity"/>
    <property type="evidence" value="ECO:0007669"/>
    <property type="project" value="UniProtKB-UniRule"/>
</dbReference>
<dbReference type="GO" id="GO:0006429">
    <property type="term" value="P:leucyl-tRNA aminoacylation"/>
    <property type="evidence" value="ECO:0007669"/>
    <property type="project" value="UniProtKB-UniRule"/>
</dbReference>
<dbReference type="CDD" id="cd07958">
    <property type="entry name" value="Anticodon_Ia_Leu_BEm"/>
    <property type="match status" value="1"/>
</dbReference>
<dbReference type="CDD" id="cd00812">
    <property type="entry name" value="LeuRS_core"/>
    <property type="match status" value="1"/>
</dbReference>
<dbReference type="FunFam" id="1.10.730.10:FF:000002">
    <property type="entry name" value="Leucine--tRNA ligase"/>
    <property type="match status" value="1"/>
</dbReference>
<dbReference type="Gene3D" id="2.20.28.290">
    <property type="match status" value="1"/>
</dbReference>
<dbReference type="Gene3D" id="3.10.20.590">
    <property type="match status" value="1"/>
</dbReference>
<dbReference type="Gene3D" id="3.40.50.620">
    <property type="entry name" value="HUPs"/>
    <property type="match status" value="2"/>
</dbReference>
<dbReference type="Gene3D" id="1.10.730.10">
    <property type="entry name" value="Isoleucyl-tRNA Synthetase, Domain 1"/>
    <property type="match status" value="1"/>
</dbReference>
<dbReference type="Gene3D" id="3.90.740.10">
    <property type="entry name" value="Valyl/Leucyl/Isoleucyl-tRNA synthetase, editing domain"/>
    <property type="match status" value="1"/>
</dbReference>
<dbReference type="HAMAP" id="MF_00049_B">
    <property type="entry name" value="Leu_tRNA_synth_B"/>
    <property type="match status" value="1"/>
</dbReference>
<dbReference type="InterPro" id="IPR001412">
    <property type="entry name" value="aa-tRNA-synth_I_CS"/>
</dbReference>
<dbReference type="InterPro" id="IPR002300">
    <property type="entry name" value="aa-tRNA-synth_Ia"/>
</dbReference>
<dbReference type="InterPro" id="IPR002302">
    <property type="entry name" value="Leu-tRNA-ligase"/>
</dbReference>
<dbReference type="InterPro" id="IPR025709">
    <property type="entry name" value="Leu_tRNA-synth_edit"/>
</dbReference>
<dbReference type="InterPro" id="IPR013155">
    <property type="entry name" value="M/V/L/I-tRNA-synth_anticd-bd"/>
</dbReference>
<dbReference type="InterPro" id="IPR015413">
    <property type="entry name" value="Methionyl/Leucyl_tRNA_Synth"/>
</dbReference>
<dbReference type="InterPro" id="IPR014729">
    <property type="entry name" value="Rossmann-like_a/b/a_fold"/>
</dbReference>
<dbReference type="InterPro" id="IPR009080">
    <property type="entry name" value="tRNAsynth_Ia_anticodon-bd"/>
</dbReference>
<dbReference type="InterPro" id="IPR009008">
    <property type="entry name" value="Val/Leu/Ile-tRNA-synth_edit"/>
</dbReference>
<dbReference type="NCBIfam" id="TIGR00396">
    <property type="entry name" value="leuS_bact"/>
    <property type="match status" value="1"/>
</dbReference>
<dbReference type="PANTHER" id="PTHR43740:SF2">
    <property type="entry name" value="LEUCINE--TRNA LIGASE, MITOCHONDRIAL"/>
    <property type="match status" value="1"/>
</dbReference>
<dbReference type="PANTHER" id="PTHR43740">
    <property type="entry name" value="LEUCYL-TRNA SYNTHETASE"/>
    <property type="match status" value="1"/>
</dbReference>
<dbReference type="Pfam" id="PF08264">
    <property type="entry name" value="Anticodon_1"/>
    <property type="match status" value="1"/>
</dbReference>
<dbReference type="Pfam" id="PF00133">
    <property type="entry name" value="tRNA-synt_1"/>
    <property type="match status" value="2"/>
</dbReference>
<dbReference type="Pfam" id="PF13603">
    <property type="entry name" value="tRNA-synt_1_2"/>
    <property type="match status" value="1"/>
</dbReference>
<dbReference type="Pfam" id="PF09334">
    <property type="entry name" value="tRNA-synt_1g"/>
    <property type="match status" value="1"/>
</dbReference>
<dbReference type="PRINTS" id="PR00985">
    <property type="entry name" value="TRNASYNTHLEU"/>
</dbReference>
<dbReference type="SUPFAM" id="SSF47323">
    <property type="entry name" value="Anticodon-binding domain of a subclass of class I aminoacyl-tRNA synthetases"/>
    <property type="match status" value="1"/>
</dbReference>
<dbReference type="SUPFAM" id="SSF52374">
    <property type="entry name" value="Nucleotidylyl transferase"/>
    <property type="match status" value="1"/>
</dbReference>
<dbReference type="SUPFAM" id="SSF50677">
    <property type="entry name" value="ValRS/IleRS/LeuRS editing domain"/>
    <property type="match status" value="1"/>
</dbReference>
<dbReference type="PROSITE" id="PS00178">
    <property type="entry name" value="AA_TRNA_LIGASE_I"/>
    <property type="match status" value="1"/>
</dbReference>
<proteinExistence type="inferred from homology"/>
<comment type="catalytic activity">
    <reaction evidence="1">
        <text>tRNA(Leu) + L-leucine + ATP = L-leucyl-tRNA(Leu) + AMP + diphosphate</text>
        <dbReference type="Rhea" id="RHEA:11688"/>
        <dbReference type="Rhea" id="RHEA-COMP:9613"/>
        <dbReference type="Rhea" id="RHEA-COMP:9622"/>
        <dbReference type="ChEBI" id="CHEBI:30616"/>
        <dbReference type="ChEBI" id="CHEBI:33019"/>
        <dbReference type="ChEBI" id="CHEBI:57427"/>
        <dbReference type="ChEBI" id="CHEBI:78442"/>
        <dbReference type="ChEBI" id="CHEBI:78494"/>
        <dbReference type="ChEBI" id="CHEBI:456215"/>
        <dbReference type="EC" id="6.1.1.4"/>
    </reaction>
</comment>
<comment type="subcellular location">
    <subcellularLocation>
        <location evidence="1">Cytoplasm</location>
    </subcellularLocation>
</comment>
<comment type="similarity">
    <text evidence="1">Belongs to the class-I aminoacyl-tRNA synthetase family.</text>
</comment>
<keyword id="KW-0030">Aminoacyl-tRNA synthetase</keyword>
<keyword id="KW-0067">ATP-binding</keyword>
<keyword id="KW-0963">Cytoplasm</keyword>
<keyword id="KW-0436">Ligase</keyword>
<keyword id="KW-0547">Nucleotide-binding</keyword>
<keyword id="KW-0648">Protein biosynthesis</keyword>
<keyword id="KW-1185">Reference proteome</keyword>
<organism>
    <name type="scientific">Paracoccus denitrificans (strain Pd 1222)</name>
    <dbReference type="NCBI Taxonomy" id="318586"/>
    <lineage>
        <taxon>Bacteria</taxon>
        <taxon>Pseudomonadati</taxon>
        <taxon>Pseudomonadota</taxon>
        <taxon>Alphaproteobacteria</taxon>
        <taxon>Rhodobacterales</taxon>
        <taxon>Paracoccaceae</taxon>
        <taxon>Paracoccus</taxon>
    </lineage>
</organism>
<accession>A1B5Q5</accession>
<evidence type="ECO:0000255" key="1">
    <source>
        <dbReference type="HAMAP-Rule" id="MF_00049"/>
    </source>
</evidence>
<sequence>MPYDPAISEPRWQEAWEQADTFRAVRDERPKYYVLEMFPYPSGRIHMGHVRNYTMGDVVARFKRAQGFSVLHPMGWDAFGMPAENAAMEQGGHPRDWTYGNIATMRGQLKPLGLSIDWSREFATCDDAYVAQQQALFLDMLEAGLITRKSAQVNWDPVDMTVLANEQVIDGKGWRSGATVERKELTQWFFKISDYSDELLSALDGLEGWPEKVRLMQANWIGKSRGLQFRFHTVDLPDFPTIEVYTTRPDTLMGASFVALSPDHPLVKALAASDPKVAAFVEECRRIGTTEEAIETAPKMGFDTGLTVRHPLDADWRLPIWIANFVLMDYGTGAIFGSPAHDERDHEFATKYGLPIRATFGERGMDLEQADALVAKAPFVPLKSETVTYVRGFAGAADQTGEAAVDAAIRHAEVAGYGEGVTKFRLRDWGISRQRYWGCPIPVVHCDACGTVPEAKANLPVLLPQDVSFEVPGNPLNRHPTWAATTCPKCGGPARRETDTMDTFVDSSWYYARFTSPHAATPTDRPETDYWMNVDQYIGGIEHAILHLLYSRFFARAMVKTGHLPESAKEPFDALFTQGMVTHEIYMTRDERGRPVYHLPEDVVDGKLADGTPVEVIPSAKMSKSKKNVVDPVNIVEGFGADTARWFMLSDSPPERDVEWTAAGAEAANRFLARVWRLADEIPEDGADPDLTRAAHRAIDEVTRAIEGFAFNKAVAKIYELANAIAKSGAGGESRREALRIMAQLMAPMVPHLAEEIWMKAGGQGMVVDATWPKADPALLVSDSVVLPIQINGKRRAEIEVPKDMPKDQIEAIVLADETVRRFMEGQAPKKLIVVPGRIVNVVV</sequence>
<reference key="1">
    <citation type="submission" date="2006-12" db="EMBL/GenBank/DDBJ databases">
        <title>Complete sequence of chromosome 1 of Paracoccus denitrificans PD1222.</title>
        <authorList>
            <person name="Copeland A."/>
            <person name="Lucas S."/>
            <person name="Lapidus A."/>
            <person name="Barry K."/>
            <person name="Detter J.C."/>
            <person name="Glavina del Rio T."/>
            <person name="Hammon N."/>
            <person name="Israni S."/>
            <person name="Dalin E."/>
            <person name="Tice H."/>
            <person name="Pitluck S."/>
            <person name="Munk A.C."/>
            <person name="Brettin T."/>
            <person name="Bruce D."/>
            <person name="Han C."/>
            <person name="Tapia R."/>
            <person name="Gilna P."/>
            <person name="Schmutz J."/>
            <person name="Larimer F."/>
            <person name="Land M."/>
            <person name="Hauser L."/>
            <person name="Kyrpides N."/>
            <person name="Lykidis A."/>
            <person name="Spiro S."/>
            <person name="Richardson D.J."/>
            <person name="Moir J.W.B."/>
            <person name="Ferguson S.J."/>
            <person name="van Spanning R.J.M."/>
            <person name="Richardson P."/>
        </authorList>
    </citation>
    <scope>NUCLEOTIDE SEQUENCE [LARGE SCALE GENOMIC DNA]</scope>
    <source>
        <strain>Pd 1222</strain>
    </source>
</reference>
<protein>
    <recommendedName>
        <fullName evidence="1">Leucine--tRNA ligase</fullName>
        <ecNumber evidence="1">6.1.1.4</ecNumber>
    </recommendedName>
    <alternativeName>
        <fullName evidence="1">Leucyl-tRNA synthetase</fullName>
        <shortName evidence="1">LeuRS</shortName>
    </alternativeName>
</protein>